<comment type="function">
    <text evidence="5 6 7">Catalyzes the conversion of geranylgeranyl diphosphate to the phytoalexin precursor syn-copalyl diphosphate (PubMed:15255861, PubMed:15341631, PubMed:23621683). Required for the biosynthesis of momilactones that exude from roots and act as allelochemicals against lowland weeds in paddy soil (PubMed:23621683).</text>
</comment>
<comment type="catalytic activity">
    <reaction evidence="5 6">
        <text>(2E,6E,10E)-geranylgeranyl diphosphate = 9alpha-copalyl diphosphate</text>
        <dbReference type="Rhea" id="RHEA:25524"/>
        <dbReference type="ChEBI" id="CHEBI:58622"/>
        <dbReference type="ChEBI" id="CHEBI:58756"/>
        <dbReference type="EC" id="5.5.1.14"/>
    </reaction>
    <physiologicalReaction direction="left-to-right" evidence="5 6">
        <dbReference type="Rhea" id="RHEA:25525"/>
    </physiologicalReaction>
</comment>
<comment type="cofactor">
    <cofactor evidence="12">
        <name>Mg(2+)</name>
        <dbReference type="ChEBI" id="CHEBI:18420"/>
    </cofactor>
</comment>
<comment type="subcellular location">
    <subcellularLocation>
        <location evidence="3">Plastid</location>
        <location evidence="3">Chloroplast</location>
    </subcellularLocation>
</comment>
<comment type="alternative products">
    <event type="alternative splicing"/>
    <isoform>
        <id>Q0JF02-1</id>
        <name>1</name>
        <sequence type="displayed"/>
    </isoform>
    <isoform>
        <id>Q0JF02-2</id>
        <name>2</name>
        <sequence type="described" ref="VSP_037143"/>
    </isoform>
    <isoform>
        <id>Q0JF02-3</id>
        <name>3</name>
        <sequence type="described" ref="VSP_037144"/>
    </isoform>
</comment>
<comment type="induction">
    <text evidence="5 6">Induced by UV irradiation (PubMed:15255861, PubMed:15341631). Induced by methyl jasmonate (PubMed:15255861).</text>
</comment>
<comment type="domain">
    <text evidence="12">The Asp-Xaa-Asp-Asp (DXDD) motif is important for the catalytic activity, presumably through binding to Mg(2+).</text>
</comment>
<comment type="disruption phenotype">
    <text evidence="7">No visible phenotype under normal growth conditions (PubMed:23621683). Mutant plants exhibit increased susceptibility to the rice blast fungus Magnaporthe grisea, and reduced capacity to inhibit germination and growth of lowland weeds in paddy soil, possibly due to decreased levels of momilactones and oryzalexin S (PubMed:23621683).</text>
</comment>
<comment type="miscellaneous">
    <text evidence="13 14">Phytoalexins are diterpenoid secondary metabolites involved in the defense mechanism of the plant and produced in response to attack (by a pathogen, elicitor or UV irradiation).</text>
</comment>
<comment type="similarity">
    <text evidence="12">Belongs to the terpene synthase family.</text>
</comment>
<comment type="sequence caution" evidence="12">
    <conflict type="erroneous gene model prediction">
        <sequence resource="EMBL-CDS" id="CAE04103"/>
    </conflict>
</comment>
<name>CPS4_ORYSJ</name>
<feature type="transit peptide" description="Chloroplast" evidence="3">
    <location>
        <begin position="1"/>
        <end position="47"/>
    </location>
</feature>
<feature type="chain" id="PRO_0000372328" description="Syn-copalyl diphosphate synthase, chloroplastic">
    <location>
        <begin position="48"/>
        <end position="767"/>
    </location>
</feature>
<feature type="region of interest" description="Disordered" evidence="4">
    <location>
        <begin position="45"/>
        <end position="74"/>
    </location>
</feature>
<feature type="short sequence motif" description="DXDD motif" evidence="12">
    <location>
        <begin position="365"/>
        <end position="368"/>
    </location>
</feature>
<feature type="compositionally biased region" description="Basic and acidic residues" evidence="4">
    <location>
        <begin position="59"/>
        <end position="74"/>
    </location>
</feature>
<feature type="binding site" evidence="2">
    <location>
        <position position="233"/>
    </location>
    <ligand>
        <name>substrate</name>
    </ligand>
</feature>
<feature type="binding site" evidence="1">
    <location>
        <position position="365"/>
    </location>
    <ligand>
        <name>Mg(2+)</name>
        <dbReference type="ChEBI" id="CHEBI:18420"/>
    </ligand>
</feature>
<feature type="binding site" evidence="1">
    <location>
        <position position="367"/>
    </location>
    <ligand>
        <name>Mg(2+)</name>
        <dbReference type="ChEBI" id="CHEBI:18420"/>
    </ligand>
</feature>
<feature type="binding site" evidence="2">
    <location>
        <position position="453"/>
    </location>
    <ligand>
        <name>substrate</name>
    </ligand>
</feature>
<feature type="splice variant" id="VSP_037143" description="In isoform 2." evidence="8">
    <location>
        <begin position="1"/>
        <end position="46"/>
    </location>
</feature>
<feature type="splice variant" id="VSP_037144" description="In isoform 3." evidence="8">
    <location>
        <begin position="45"/>
        <end position="307"/>
    </location>
</feature>
<feature type="sequence conflict" description="In Ref. 1; BAD42451." evidence="12" ref="1">
    <original>D</original>
    <variation>N</variation>
    <location>
        <position position="142"/>
    </location>
</feature>
<feature type="sequence conflict" description="In Ref. 1; BAD42451." evidence="12" ref="1">
    <original>Y</original>
    <variation>S</variation>
    <location>
        <position position="296"/>
    </location>
</feature>
<feature type="sequence conflict" description="In Ref. 1; BAD42451." evidence="12" ref="1">
    <location>
        <position position="496"/>
    </location>
</feature>
<feature type="sequence conflict" description="In Ref. 6; AK121319." evidence="12" ref="6">
    <original>L</original>
    <variation>I</variation>
    <location>
        <position position="533"/>
    </location>
</feature>
<keyword id="KW-0002">3D-structure</keyword>
<keyword id="KW-0025">Alternative splicing</keyword>
<keyword id="KW-0150">Chloroplast</keyword>
<keyword id="KW-0413">Isomerase</keyword>
<keyword id="KW-0460">Magnesium</keyword>
<keyword id="KW-0479">Metal-binding</keyword>
<keyword id="KW-0611">Plant defense</keyword>
<keyword id="KW-0934">Plastid</keyword>
<keyword id="KW-1185">Reference proteome</keyword>
<keyword id="KW-0809">Transit peptide</keyword>
<sequence>MPVFTASFQCVTLFGQPASAADAQPLLQGQRPFLHLHARRRRPCGPMLISKSPPYPASEETREWEADGQHEHTDELRETTTTMIDGIRTALRSIGEGEISISAYDTSLVALLKRLDGGDGPQFPSTIDWIVQNQLPDGSWGDASFFMMGDRIMSTLACVVALKSWNIHTDKCERGLLFIQENMWRLAHEEEDWMLVGFEIALPSLLDMAKDLDLDIPYDEPALKAIYAERERKLAKIPRDVLHSMPTTLLHSLEGMVDLDWEKLLKLRCLDGSFHCSPASTATAFQQTGDQKCFEYLDGIVKKFNGGVPCIYPLDVYERLWAVDRLTRLGISRHFTSEIEDCLDYIFRNWTPDGLAHTKNCPVKDIDDTAMGFRLLRLYGYQVDPCVLKKFEKDGKFFCLHGESNPSSVTPMYNTYRASQLKFPGDDGVLGRAEVFCRSFLQDRRGSNRMKDKWAIAKDIPGEVEYAMDYPWKASLPRIETRLYLDQYGGSGDVWIGKVLHRMTLFCNDLYLKAAKADFSNFQKECRVELNGLRRWYLRSNLEKFGGTDPQTTLMTSYFLASANIFEANRAAERLGWARVALLADAVSSHFRRIGGPKNSTSNLEELISLVPFDDAYSGSLREAWKQWLMAWTAKESSQESIEGDTAILLVRAIEIFGGRHVLTGQRPDLWEYSQLEQLTSSICCKLSRRVLAQENGESTEKVEEIDQQVDLEMQELTRRVLQGCSAINRLTRETFLHVVKSFCYVAYCSPETIDSHIDKVIFQDVI</sequence>
<reference key="1">
    <citation type="journal article" date="2004" name="Plant J.">
        <title>Biological functions of ent- and syn-copalyl diphosphate synthases in rice: key enzymes for the branch point of gibberellin and phytoalexin biosynthesis.</title>
        <authorList>
            <person name="Ootomo K."/>
            <person name="Kenmoku H."/>
            <person name="Oikawa H."/>
            <person name="Koenig W.A."/>
            <person name="Toshima H."/>
            <person name="Mitsuhashi W."/>
            <person name="Yamane H."/>
            <person name="Sassa T."/>
            <person name="Toyomasu T."/>
        </authorList>
    </citation>
    <scope>NUCLEOTIDE SEQUENCE [MRNA] (ISOFORM 1)</scope>
    <scope>FUNCTION</scope>
    <scope>CATALYTIC ACTIVITY</scope>
    <scope>INDUCTION</scope>
    <source>
        <strain>cv. Nipponbare</strain>
    </source>
</reference>
<reference key="2">
    <citation type="journal article" date="2002" name="Nature">
        <title>Sequence and analysis of rice chromosome 4.</title>
        <authorList>
            <person name="Feng Q."/>
            <person name="Zhang Y."/>
            <person name="Hao P."/>
            <person name="Wang S."/>
            <person name="Fu G."/>
            <person name="Huang Y."/>
            <person name="Li Y."/>
            <person name="Zhu J."/>
            <person name="Liu Y."/>
            <person name="Hu X."/>
            <person name="Jia P."/>
            <person name="Zhang Y."/>
            <person name="Zhao Q."/>
            <person name="Ying K."/>
            <person name="Yu S."/>
            <person name="Tang Y."/>
            <person name="Weng Q."/>
            <person name="Zhang L."/>
            <person name="Lu Y."/>
            <person name="Mu J."/>
            <person name="Lu Y."/>
            <person name="Zhang L.S."/>
            <person name="Yu Z."/>
            <person name="Fan D."/>
            <person name="Liu X."/>
            <person name="Lu T."/>
            <person name="Li C."/>
            <person name="Wu Y."/>
            <person name="Sun T."/>
            <person name="Lei H."/>
            <person name="Li T."/>
            <person name="Hu H."/>
            <person name="Guan J."/>
            <person name="Wu M."/>
            <person name="Zhang R."/>
            <person name="Zhou B."/>
            <person name="Chen Z."/>
            <person name="Chen L."/>
            <person name="Jin Z."/>
            <person name="Wang R."/>
            <person name="Yin H."/>
            <person name="Cai Z."/>
            <person name="Ren S."/>
            <person name="Lv G."/>
            <person name="Gu W."/>
            <person name="Zhu G."/>
            <person name="Tu Y."/>
            <person name="Jia J."/>
            <person name="Zhang Y."/>
            <person name="Chen J."/>
            <person name="Kang H."/>
            <person name="Chen X."/>
            <person name="Shao C."/>
            <person name="Sun Y."/>
            <person name="Hu Q."/>
            <person name="Zhang X."/>
            <person name="Zhang W."/>
            <person name="Wang L."/>
            <person name="Ding C."/>
            <person name="Sheng H."/>
            <person name="Gu J."/>
            <person name="Chen S."/>
            <person name="Ni L."/>
            <person name="Zhu F."/>
            <person name="Chen W."/>
            <person name="Lan L."/>
            <person name="Lai Y."/>
            <person name="Cheng Z."/>
            <person name="Gu M."/>
            <person name="Jiang J."/>
            <person name="Li J."/>
            <person name="Hong G."/>
            <person name="Xue Y."/>
            <person name="Han B."/>
        </authorList>
    </citation>
    <scope>NUCLEOTIDE SEQUENCE [LARGE SCALE GENOMIC DNA]</scope>
    <source>
        <strain>cv. Nipponbare</strain>
    </source>
</reference>
<reference key="3">
    <citation type="journal article" date="2005" name="Nature">
        <title>The map-based sequence of the rice genome.</title>
        <authorList>
            <consortium name="International rice genome sequencing project (IRGSP)"/>
        </authorList>
    </citation>
    <scope>NUCLEOTIDE SEQUENCE [LARGE SCALE GENOMIC DNA]</scope>
    <source>
        <strain>cv. Nipponbare</strain>
    </source>
</reference>
<reference key="4">
    <citation type="journal article" date="2008" name="Nucleic Acids Res.">
        <title>The rice annotation project database (RAP-DB): 2008 update.</title>
        <authorList>
            <consortium name="The rice annotation project (RAP)"/>
        </authorList>
    </citation>
    <scope>GENOME REANNOTATION</scope>
    <source>
        <strain>cv. Nipponbare</strain>
    </source>
</reference>
<reference key="5">
    <citation type="journal article" date="2013" name="Rice">
        <title>Improvement of the Oryza sativa Nipponbare reference genome using next generation sequence and optical map data.</title>
        <authorList>
            <person name="Kawahara Y."/>
            <person name="de la Bastide M."/>
            <person name="Hamilton J.P."/>
            <person name="Kanamori H."/>
            <person name="McCombie W.R."/>
            <person name="Ouyang S."/>
            <person name="Schwartz D.C."/>
            <person name="Tanaka T."/>
            <person name="Wu J."/>
            <person name="Zhou S."/>
            <person name="Childs K.L."/>
            <person name="Davidson R.M."/>
            <person name="Lin H."/>
            <person name="Quesada-Ocampo L."/>
            <person name="Vaillancourt B."/>
            <person name="Sakai H."/>
            <person name="Lee S.S."/>
            <person name="Kim J."/>
            <person name="Numa H."/>
            <person name="Itoh T."/>
            <person name="Buell C.R."/>
            <person name="Matsumoto T."/>
        </authorList>
    </citation>
    <scope>GENOME REANNOTATION</scope>
    <source>
        <strain>cv. Nipponbare</strain>
    </source>
</reference>
<reference key="6">
    <citation type="journal article" date="2003" name="Science">
        <title>Collection, mapping, and annotation of over 28,000 cDNA clones from japonica rice.</title>
        <authorList>
            <consortium name="The rice full-length cDNA consortium"/>
        </authorList>
    </citation>
    <scope>NUCLEOTIDE SEQUENCE [LARGE SCALE MRNA] (ISOFORMS 2 AND 3)</scope>
    <source>
        <strain>cv. Nipponbare</strain>
    </source>
</reference>
<reference key="7">
    <citation type="journal article" date="2004" name="Plant J.">
        <title>Functional identification of rice syn-copalyl diphosphate synthase and its role in initiating biosynthesis of diterpenoid phytoalexin/allelopathic natural products.</title>
        <authorList>
            <person name="Xu M."/>
            <person name="Hillwig M.L."/>
            <person name="Prisic S."/>
            <person name="Coates R.M."/>
            <person name="Peters R.J."/>
        </authorList>
    </citation>
    <scope>FUNCTION</scope>
    <scope>CATALYTIC ACTIVITY</scope>
    <scope>INDUCTION</scope>
</reference>
<reference key="8">
    <citation type="journal article" date="2014" name="Physiol. Plantarum">
        <title>Reverse-genetic approach to verify physiological roles of rice phytoalexins: characterization of a knockdown mutant of OsCPS4 phytoalexin biosynthetic gene in rice.</title>
        <authorList>
            <person name="Toyomasu T."/>
            <person name="Usui M."/>
            <person name="Sugawara C."/>
            <person name="Otomo K."/>
            <person name="Hirose Y."/>
            <person name="Miyao A."/>
            <person name="Hirochika H."/>
            <person name="Okada K."/>
            <person name="Shimizu T."/>
            <person name="Koga J."/>
            <person name="Hasegawa M."/>
            <person name="Chuba M."/>
            <person name="Kawana Y."/>
            <person name="Kuroda M."/>
            <person name="Minami E."/>
            <person name="Mitsuhashi W."/>
            <person name="Yamane H."/>
        </authorList>
    </citation>
    <scope>FUNCTION</scope>
    <scope>DISRUPTION PHENOTYPE</scope>
</reference>
<dbReference type="EC" id="5.5.1.14" evidence="5 6"/>
<dbReference type="EMBL" id="AB066270">
    <property type="protein sequence ID" value="BAD42451.1"/>
    <property type="molecule type" value="mRNA"/>
</dbReference>
<dbReference type="EMBL" id="AL662933">
    <property type="protein sequence ID" value="CAE04103.3"/>
    <property type="status" value="ALT_SEQ"/>
    <property type="molecule type" value="Genomic_DNA"/>
</dbReference>
<dbReference type="EMBL" id="AP008210">
    <property type="protein sequence ID" value="BAF14085.1"/>
    <property type="molecule type" value="Genomic_DNA"/>
</dbReference>
<dbReference type="EMBL" id="AP014960">
    <property type="protein sequence ID" value="BAS87948.1"/>
    <property type="molecule type" value="Genomic_DNA"/>
</dbReference>
<dbReference type="EMBL" id="AK100631">
    <property type="status" value="NOT_ANNOTATED_CDS"/>
    <property type="molecule type" value="mRNA"/>
</dbReference>
<dbReference type="EMBL" id="AK121319">
    <property type="status" value="NOT_ANNOTATED_CDS"/>
    <property type="molecule type" value="mRNA"/>
</dbReference>
<dbReference type="RefSeq" id="XP_015637092.1">
    <property type="nucleotide sequence ID" value="XM_015781606.1"/>
</dbReference>
<dbReference type="PDB" id="8I6P">
    <property type="method" value="EM"/>
    <property type="resolution" value="3.50 A"/>
    <property type="chains" value="A/B/C/D=1-767"/>
</dbReference>
<dbReference type="PDB" id="8I6T">
    <property type="method" value="EM"/>
    <property type="resolution" value="3.70 A"/>
    <property type="chains" value="A/B/C/D/E/F=1-767"/>
</dbReference>
<dbReference type="PDB" id="8I6U">
    <property type="method" value="EM"/>
    <property type="resolution" value="7.90 A"/>
    <property type="chains" value="A/B=1-767"/>
</dbReference>
<dbReference type="PDB" id="8IH5">
    <property type="method" value="EM"/>
    <property type="resolution" value="4.00 A"/>
    <property type="chains" value="A/B/C/D/E/F=1-767"/>
</dbReference>
<dbReference type="PDB" id="8KBW">
    <property type="method" value="X-ray"/>
    <property type="resolution" value="3.49 A"/>
    <property type="chains" value="A/B/C/D/E/F=1-767"/>
</dbReference>
<dbReference type="PDBsum" id="8I6P"/>
<dbReference type="PDBsum" id="8I6T"/>
<dbReference type="PDBsum" id="8I6U"/>
<dbReference type="PDBsum" id="8IH5"/>
<dbReference type="PDBsum" id="8KBW"/>
<dbReference type="EMDB" id="EMD-35202"/>
<dbReference type="EMDB" id="EMD-35206"/>
<dbReference type="EMDB" id="EMD-35207"/>
<dbReference type="EMDB" id="EMD-35440"/>
<dbReference type="SMR" id="Q0JF02"/>
<dbReference type="FunCoup" id="Q0JF02">
    <property type="interactions" value="55"/>
</dbReference>
<dbReference type="STRING" id="39947.Q0JF02"/>
<dbReference type="PaxDb" id="39947-Q0JF02"/>
<dbReference type="EnsemblPlants" id="Os04t0178300-03">
    <molecule id="Q0JF02-1"/>
    <property type="protein sequence ID" value="Os04t0178300-03"/>
    <property type="gene ID" value="Os04g0178300"/>
</dbReference>
<dbReference type="Gramene" id="Os04t0178300-03">
    <molecule id="Q0JF02-1"/>
    <property type="protein sequence ID" value="Os04t0178300-03"/>
    <property type="gene ID" value="Os04g0178300"/>
</dbReference>
<dbReference type="KEGG" id="dosa:Os04g0178300"/>
<dbReference type="eggNOG" id="ENOG502QQN6">
    <property type="taxonomic scope" value="Eukaryota"/>
</dbReference>
<dbReference type="HOGENOM" id="CLU_003125_3_2_1"/>
<dbReference type="InParanoid" id="Q0JF02"/>
<dbReference type="OrthoDB" id="2343925at2759"/>
<dbReference type="BioCyc" id="MetaCyc:CYC1-MONOMER"/>
<dbReference type="BRENDA" id="5.5.1.14">
    <property type="organism ID" value="4460"/>
</dbReference>
<dbReference type="PlantReactome" id="R-OSA-1119308">
    <property type="pathway name" value="Momilactone biosynthesis"/>
</dbReference>
<dbReference type="Proteomes" id="UP000000763">
    <property type="component" value="Chromosome 4"/>
</dbReference>
<dbReference type="Proteomes" id="UP000059680">
    <property type="component" value="Chromosome 4"/>
</dbReference>
<dbReference type="GO" id="GO:0009507">
    <property type="term" value="C:chloroplast"/>
    <property type="evidence" value="ECO:0000318"/>
    <property type="project" value="GO_Central"/>
</dbReference>
<dbReference type="GO" id="GO:0000287">
    <property type="term" value="F:magnesium ion binding"/>
    <property type="evidence" value="ECO:0000318"/>
    <property type="project" value="GO_Central"/>
</dbReference>
<dbReference type="GO" id="GO:0051498">
    <property type="term" value="F:syn-copalyl diphosphate synthase activity"/>
    <property type="evidence" value="ECO:0007669"/>
    <property type="project" value="UniProtKB-EC"/>
</dbReference>
<dbReference type="GO" id="GO:0010333">
    <property type="term" value="F:terpene synthase activity"/>
    <property type="evidence" value="ECO:0000318"/>
    <property type="project" value="GO_Central"/>
</dbReference>
<dbReference type="GO" id="GO:0006952">
    <property type="term" value="P:defense response"/>
    <property type="evidence" value="ECO:0007669"/>
    <property type="project" value="UniProtKB-KW"/>
</dbReference>
<dbReference type="GO" id="GO:0009686">
    <property type="term" value="P:gibberellin biosynthetic process"/>
    <property type="evidence" value="ECO:0000318"/>
    <property type="project" value="GO_Central"/>
</dbReference>
<dbReference type="FunFam" id="1.50.10.160:FF:000001">
    <property type="entry name" value="Ent-copalyl diphosphate synthase"/>
    <property type="match status" value="1"/>
</dbReference>
<dbReference type="FunFam" id="1.50.10.130:FF:000002">
    <property type="entry name" value="Ent-copalyl diphosphate synthase, chloroplastic"/>
    <property type="match status" value="1"/>
</dbReference>
<dbReference type="FunFam" id="1.10.600.10:FF:000031">
    <property type="entry name" value="Syn-copalyl diphosphate synthase"/>
    <property type="match status" value="1"/>
</dbReference>
<dbReference type="FunFam" id="1.10.600.10:FF:000032">
    <property type="entry name" value="Syn-copalyl diphosphate synthase"/>
    <property type="match status" value="1"/>
</dbReference>
<dbReference type="Gene3D" id="1.50.10.160">
    <property type="match status" value="1"/>
</dbReference>
<dbReference type="Gene3D" id="1.10.600.10">
    <property type="entry name" value="Farnesyl Diphosphate Synthase"/>
    <property type="match status" value="2"/>
</dbReference>
<dbReference type="Gene3D" id="1.50.10.130">
    <property type="entry name" value="Terpene synthase, N-terminal domain"/>
    <property type="match status" value="1"/>
</dbReference>
<dbReference type="InterPro" id="IPR008949">
    <property type="entry name" value="Isoprenoid_synthase_dom_sf"/>
</dbReference>
<dbReference type="InterPro" id="IPR001906">
    <property type="entry name" value="Terpene_synth_N"/>
</dbReference>
<dbReference type="InterPro" id="IPR036965">
    <property type="entry name" value="Terpene_synth_N_sf"/>
</dbReference>
<dbReference type="InterPro" id="IPR050148">
    <property type="entry name" value="Terpene_synthase-like"/>
</dbReference>
<dbReference type="InterPro" id="IPR008930">
    <property type="entry name" value="Terpenoid_cyclase/PrenylTrfase"/>
</dbReference>
<dbReference type="PANTHER" id="PTHR31739">
    <property type="entry name" value="ENT-COPALYL DIPHOSPHATE SYNTHASE, CHLOROPLASTIC"/>
    <property type="match status" value="1"/>
</dbReference>
<dbReference type="PANTHER" id="PTHR31739:SF4">
    <property type="entry name" value="ENT-COPALYL DIPHOSPHATE SYNTHASE, CHLOROPLASTIC"/>
    <property type="match status" value="1"/>
</dbReference>
<dbReference type="Pfam" id="PF01397">
    <property type="entry name" value="Terpene_synth"/>
    <property type="match status" value="1"/>
</dbReference>
<dbReference type="SFLD" id="SFLDG01014">
    <property type="entry name" value="Terpene_Cyclase_Like_1_N-term"/>
    <property type="match status" value="1"/>
</dbReference>
<dbReference type="SFLD" id="SFLDG01605">
    <property type="entry name" value="Terpene_Cyclase_Like_1_N-term"/>
    <property type="match status" value="1"/>
</dbReference>
<dbReference type="SUPFAM" id="SSF48239">
    <property type="entry name" value="Terpenoid cyclases/Protein prenyltransferases"/>
    <property type="match status" value="2"/>
</dbReference>
<dbReference type="SUPFAM" id="SSF48576">
    <property type="entry name" value="Terpenoid synthases"/>
    <property type="match status" value="1"/>
</dbReference>
<evidence type="ECO:0000250" key="1">
    <source>
        <dbReference type="UniProtKB" id="C7BKP9"/>
    </source>
</evidence>
<evidence type="ECO:0000250" key="2">
    <source>
        <dbReference type="UniProtKB" id="Q38802"/>
    </source>
</evidence>
<evidence type="ECO:0000255" key="3"/>
<evidence type="ECO:0000256" key="4">
    <source>
        <dbReference type="SAM" id="MobiDB-lite"/>
    </source>
</evidence>
<evidence type="ECO:0000269" key="5">
    <source>
    </source>
</evidence>
<evidence type="ECO:0000269" key="6">
    <source>
    </source>
</evidence>
<evidence type="ECO:0000269" key="7">
    <source>
    </source>
</evidence>
<evidence type="ECO:0000303" key="8">
    <source>
    </source>
</evidence>
<evidence type="ECO:0000303" key="9">
    <source>
    </source>
</evidence>
<evidence type="ECO:0000303" key="10">
    <source>
    </source>
</evidence>
<evidence type="ECO:0000303" key="11">
    <source>
    </source>
</evidence>
<evidence type="ECO:0000305" key="12"/>
<evidence type="ECO:0000305" key="13">
    <source>
    </source>
</evidence>
<evidence type="ECO:0000305" key="14">
    <source>
    </source>
</evidence>
<evidence type="ECO:0000312" key="15">
    <source>
        <dbReference type="EMBL" id="BAS87948.1"/>
    </source>
</evidence>
<evidence type="ECO:0000312" key="16">
    <source>
        <dbReference type="EMBL" id="CAE04103.3"/>
    </source>
</evidence>
<proteinExistence type="evidence at protein level"/>
<organism>
    <name type="scientific">Oryza sativa subsp. japonica</name>
    <name type="common">Rice</name>
    <dbReference type="NCBI Taxonomy" id="39947"/>
    <lineage>
        <taxon>Eukaryota</taxon>
        <taxon>Viridiplantae</taxon>
        <taxon>Streptophyta</taxon>
        <taxon>Embryophyta</taxon>
        <taxon>Tracheophyta</taxon>
        <taxon>Spermatophyta</taxon>
        <taxon>Magnoliopsida</taxon>
        <taxon>Liliopsida</taxon>
        <taxon>Poales</taxon>
        <taxon>Poaceae</taxon>
        <taxon>BOP clade</taxon>
        <taxon>Oryzoideae</taxon>
        <taxon>Oryzeae</taxon>
        <taxon>Oryzinae</taxon>
        <taxon>Oryza</taxon>
        <taxon>Oryza sativa</taxon>
    </lineage>
</organism>
<protein>
    <recommendedName>
        <fullName evidence="10">Syn-copalyl diphosphate synthase, chloroplastic</fullName>
        <shortName evidence="9">OsCPSsyn</shortName>
        <shortName evidence="9">Syn-CPP synthase</shortName>
        <ecNumber evidence="5 6">5.5.1.14</ecNumber>
    </recommendedName>
    <alternativeName>
        <fullName evidence="11">OsCPS4</fullName>
    </alternativeName>
    <alternativeName>
        <fullName evidence="10">OsCyc1</fullName>
    </alternativeName>
</protein>
<accession>Q0JF02</accession>
<accession>Q68CM0</accession>
<accession>Q7XNG1</accession>
<gene>
    <name evidence="11" type="primary">CPS4</name>
    <name evidence="10" type="synonym">CYC1</name>
    <name evidence="15" type="ordered locus">Os04g0178300</name>
    <name evidence="12" type="ordered locus">LOC_Os04g09900</name>
    <name evidence="16" type="ORF">OSJNBa0096F01.12</name>
</gene>